<dbReference type="EMBL" id="CR378664">
    <property type="protein sequence ID" value="CAG18827.1"/>
    <property type="molecule type" value="Genomic_DNA"/>
</dbReference>
<dbReference type="RefSeq" id="WP_006228392.1">
    <property type="nucleotide sequence ID" value="NC_006370.1"/>
</dbReference>
<dbReference type="SMR" id="Q6LV48"/>
<dbReference type="STRING" id="298386.PBPRA0395"/>
<dbReference type="KEGG" id="ppr:PBPRA0395"/>
<dbReference type="eggNOG" id="COG0211">
    <property type="taxonomic scope" value="Bacteria"/>
</dbReference>
<dbReference type="HOGENOM" id="CLU_095424_4_1_6"/>
<dbReference type="Proteomes" id="UP000000593">
    <property type="component" value="Chromosome 1"/>
</dbReference>
<dbReference type="GO" id="GO:0022625">
    <property type="term" value="C:cytosolic large ribosomal subunit"/>
    <property type="evidence" value="ECO:0007669"/>
    <property type="project" value="TreeGrafter"/>
</dbReference>
<dbReference type="GO" id="GO:0003735">
    <property type="term" value="F:structural constituent of ribosome"/>
    <property type="evidence" value="ECO:0007669"/>
    <property type="project" value="InterPro"/>
</dbReference>
<dbReference type="GO" id="GO:0006412">
    <property type="term" value="P:translation"/>
    <property type="evidence" value="ECO:0007669"/>
    <property type="project" value="UniProtKB-UniRule"/>
</dbReference>
<dbReference type="FunFam" id="2.40.50.100:FF:000001">
    <property type="entry name" value="50S ribosomal protein L27"/>
    <property type="match status" value="1"/>
</dbReference>
<dbReference type="Gene3D" id="2.40.50.100">
    <property type="match status" value="1"/>
</dbReference>
<dbReference type="HAMAP" id="MF_00539">
    <property type="entry name" value="Ribosomal_bL27"/>
    <property type="match status" value="1"/>
</dbReference>
<dbReference type="InterPro" id="IPR001684">
    <property type="entry name" value="Ribosomal_bL27"/>
</dbReference>
<dbReference type="InterPro" id="IPR018261">
    <property type="entry name" value="Ribosomal_bL27_CS"/>
</dbReference>
<dbReference type="NCBIfam" id="TIGR00062">
    <property type="entry name" value="L27"/>
    <property type="match status" value="1"/>
</dbReference>
<dbReference type="PANTHER" id="PTHR15893:SF0">
    <property type="entry name" value="LARGE RIBOSOMAL SUBUNIT PROTEIN BL27M"/>
    <property type="match status" value="1"/>
</dbReference>
<dbReference type="PANTHER" id="PTHR15893">
    <property type="entry name" value="RIBOSOMAL PROTEIN L27"/>
    <property type="match status" value="1"/>
</dbReference>
<dbReference type="Pfam" id="PF01016">
    <property type="entry name" value="Ribosomal_L27"/>
    <property type="match status" value="1"/>
</dbReference>
<dbReference type="PRINTS" id="PR00063">
    <property type="entry name" value="RIBOSOMALL27"/>
</dbReference>
<dbReference type="SUPFAM" id="SSF110324">
    <property type="entry name" value="Ribosomal L27 protein-like"/>
    <property type="match status" value="1"/>
</dbReference>
<dbReference type="PROSITE" id="PS00831">
    <property type="entry name" value="RIBOSOMAL_L27"/>
    <property type="match status" value="1"/>
</dbReference>
<evidence type="ECO:0000255" key="1">
    <source>
        <dbReference type="HAMAP-Rule" id="MF_00539"/>
    </source>
</evidence>
<evidence type="ECO:0000256" key="2">
    <source>
        <dbReference type="SAM" id="MobiDB-lite"/>
    </source>
</evidence>
<evidence type="ECO:0000305" key="3"/>
<reference key="1">
    <citation type="journal article" date="2005" name="Science">
        <title>Life at depth: Photobacterium profundum genome sequence and expression analysis.</title>
        <authorList>
            <person name="Vezzi A."/>
            <person name="Campanaro S."/>
            <person name="D'Angelo M."/>
            <person name="Simonato F."/>
            <person name="Vitulo N."/>
            <person name="Lauro F.M."/>
            <person name="Cestaro A."/>
            <person name="Malacrida G."/>
            <person name="Simionati B."/>
            <person name="Cannata N."/>
            <person name="Romualdi C."/>
            <person name="Bartlett D.H."/>
            <person name="Valle G."/>
        </authorList>
    </citation>
    <scope>NUCLEOTIDE SEQUENCE [LARGE SCALE GENOMIC DNA]</scope>
    <source>
        <strain>ATCC BAA-1253 / SS9</strain>
    </source>
</reference>
<accession>Q6LV48</accession>
<comment type="similarity">
    <text evidence="1">Belongs to the bacterial ribosomal protein bL27 family.</text>
</comment>
<feature type="chain" id="PRO_0000181141" description="Large ribosomal subunit protein bL27">
    <location>
        <begin position="1"/>
        <end position="85"/>
    </location>
</feature>
<feature type="region of interest" description="Disordered" evidence="2">
    <location>
        <begin position="1"/>
        <end position="22"/>
    </location>
</feature>
<sequence>MAHKKAGGSTNNGRDSESKRLGVKRFGGESVLAGNIIVRQRGTKFHAGTNVGLGKDHTLFALTDGKVKFEVKGPKNRKFVTIEAA</sequence>
<organism>
    <name type="scientific">Photobacterium profundum (strain SS9)</name>
    <dbReference type="NCBI Taxonomy" id="298386"/>
    <lineage>
        <taxon>Bacteria</taxon>
        <taxon>Pseudomonadati</taxon>
        <taxon>Pseudomonadota</taxon>
        <taxon>Gammaproteobacteria</taxon>
        <taxon>Vibrionales</taxon>
        <taxon>Vibrionaceae</taxon>
        <taxon>Photobacterium</taxon>
    </lineage>
</organism>
<name>RL27_PHOPR</name>
<keyword id="KW-1185">Reference proteome</keyword>
<keyword id="KW-0687">Ribonucleoprotein</keyword>
<keyword id="KW-0689">Ribosomal protein</keyword>
<gene>
    <name evidence="1" type="primary">rpmA</name>
    <name type="ordered locus">PBPRA0395</name>
</gene>
<protein>
    <recommendedName>
        <fullName evidence="1">Large ribosomal subunit protein bL27</fullName>
    </recommendedName>
    <alternativeName>
        <fullName evidence="3">50S ribosomal protein L27</fullName>
    </alternativeName>
</protein>
<proteinExistence type="inferred from homology"/>